<comment type="subcellular location">
    <subcellularLocation>
        <location evidence="1">Cell membrane</location>
        <topology evidence="1">Multi-pass membrane protein</topology>
    </subcellularLocation>
</comment>
<comment type="similarity">
    <text evidence="1">Belongs to the UPF0391 family.</text>
</comment>
<protein>
    <recommendedName>
        <fullName evidence="1">UPF0391 membrane protein YPO0432/y3747/YP_3749</fullName>
    </recommendedName>
</protein>
<keyword id="KW-1003">Cell membrane</keyword>
<keyword id="KW-0472">Membrane</keyword>
<keyword id="KW-1185">Reference proteome</keyword>
<keyword id="KW-0812">Transmembrane</keyword>
<keyword id="KW-1133">Transmembrane helix</keyword>
<name>Y3749_YERPE</name>
<organism>
    <name type="scientific">Yersinia pestis</name>
    <dbReference type="NCBI Taxonomy" id="632"/>
    <lineage>
        <taxon>Bacteria</taxon>
        <taxon>Pseudomonadati</taxon>
        <taxon>Pseudomonadota</taxon>
        <taxon>Gammaproteobacteria</taxon>
        <taxon>Enterobacterales</taxon>
        <taxon>Yersiniaceae</taxon>
        <taxon>Yersinia</taxon>
    </lineage>
</organism>
<reference key="1">
    <citation type="journal article" date="2001" name="Nature">
        <title>Genome sequence of Yersinia pestis, the causative agent of plague.</title>
        <authorList>
            <person name="Parkhill J."/>
            <person name="Wren B.W."/>
            <person name="Thomson N.R."/>
            <person name="Titball R.W."/>
            <person name="Holden M.T.G."/>
            <person name="Prentice M.B."/>
            <person name="Sebaihia M."/>
            <person name="James K.D."/>
            <person name="Churcher C.M."/>
            <person name="Mungall K.L."/>
            <person name="Baker S."/>
            <person name="Basham D."/>
            <person name="Bentley S.D."/>
            <person name="Brooks K."/>
            <person name="Cerdeno-Tarraga A.-M."/>
            <person name="Chillingworth T."/>
            <person name="Cronin A."/>
            <person name="Davies R.M."/>
            <person name="Davis P."/>
            <person name="Dougan G."/>
            <person name="Feltwell T."/>
            <person name="Hamlin N."/>
            <person name="Holroyd S."/>
            <person name="Jagels K."/>
            <person name="Karlyshev A.V."/>
            <person name="Leather S."/>
            <person name="Moule S."/>
            <person name="Oyston P.C.F."/>
            <person name="Quail M.A."/>
            <person name="Rutherford K.M."/>
            <person name="Simmonds M."/>
            <person name="Skelton J."/>
            <person name="Stevens K."/>
            <person name="Whitehead S."/>
            <person name="Barrell B.G."/>
        </authorList>
    </citation>
    <scope>NUCLEOTIDE SEQUENCE [LARGE SCALE GENOMIC DNA]</scope>
    <source>
        <strain>CO-92 / Biovar Orientalis</strain>
    </source>
</reference>
<reference key="2">
    <citation type="journal article" date="2002" name="J. Bacteriol.">
        <title>Genome sequence of Yersinia pestis KIM.</title>
        <authorList>
            <person name="Deng W."/>
            <person name="Burland V."/>
            <person name="Plunkett G. III"/>
            <person name="Boutin A."/>
            <person name="Mayhew G.F."/>
            <person name="Liss P."/>
            <person name="Perna N.T."/>
            <person name="Rose D.J."/>
            <person name="Mau B."/>
            <person name="Zhou S."/>
            <person name="Schwartz D.C."/>
            <person name="Fetherston J.D."/>
            <person name="Lindler L.E."/>
            <person name="Brubaker R.R."/>
            <person name="Plano G.V."/>
            <person name="Straley S.C."/>
            <person name="McDonough K.A."/>
            <person name="Nilles M.L."/>
            <person name="Matson J.S."/>
            <person name="Blattner F.R."/>
            <person name="Perry R.D."/>
        </authorList>
    </citation>
    <scope>NUCLEOTIDE SEQUENCE [LARGE SCALE GENOMIC DNA]</scope>
    <source>
        <strain>KIM10+ / Biovar Mediaevalis</strain>
    </source>
</reference>
<reference key="3">
    <citation type="journal article" date="2004" name="DNA Res.">
        <title>Complete genome sequence of Yersinia pestis strain 91001, an isolate avirulent to humans.</title>
        <authorList>
            <person name="Song Y."/>
            <person name="Tong Z."/>
            <person name="Wang J."/>
            <person name="Wang L."/>
            <person name="Guo Z."/>
            <person name="Han Y."/>
            <person name="Zhang J."/>
            <person name="Pei D."/>
            <person name="Zhou D."/>
            <person name="Qin H."/>
            <person name="Pang X."/>
            <person name="Han Y."/>
            <person name="Zhai J."/>
            <person name="Li M."/>
            <person name="Cui B."/>
            <person name="Qi Z."/>
            <person name="Jin L."/>
            <person name="Dai R."/>
            <person name="Chen F."/>
            <person name="Li S."/>
            <person name="Ye C."/>
            <person name="Du Z."/>
            <person name="Lin W."/>
            <person name="Wang J."/>
            <person name="Yu J."/>
            <person name="Yang H."/>
            <person name="Wang J."/>
            <person name="Huang P."/>
            <person name="Yang R."/>
        </authorList>
    </citation>
    <scope>NUCLEOTIDE SEQUENCE [LARGE SCALE GENOMIC DNA]</scope>
    <source>
        <strain>91001 / Biovar Mediaevalis</strain>
    </source>
</reference>
<proteinExistence type="inferred from homology"/>
<accession>Q7CG59</accession>
<accession>Q74PY4</accession>
<gene>
    <name type="ordered locus">YPO0432</name>
    <name type="ordered locus">y3747</name>
    <name type="ordered locus">YP_3749</name>
</gene>
<evidence type="ECO:0000255" key="1">
    <source>
        <dbReference type="HAMAP-Rule" id="MF_01361"/>
    </source>
</evidence>
<sequence length="53" mass="5723">MFRWGIIFLIIALIEAALGFGGLAGTAAWAAKVVFVVGIILFLISLFTGRKRL</sequence>
<feature type="chain" id="PRO_0000256808" description="UPF0391 membrane protein YPO0432/y3747/YP_3749">
    <location>
        <begin position="1"/>
        <end position="53"/>
    </location>
</feature>
<feature type="transmembrane region" description="Helical" evidence="1">
    <location>
        <begin position="4"/>
        <end position="24"/>
    </location>
</feature>
<feature type="transmembrane region" description="Helical" evidence="1">
    <location>
        <begin position="27"/>
        <end position="47"/>
    </location>
</feature>
<dbReference type="EMBL" id="AE009952">
    <property type="protein sequence ID" value="AAM87292.1"/>
    <property type="molecule type" value="Genomic_DNA"/>
</dbReference>
<dbReference type="EMBL" id="AL590842">
    <property type="protein sequence ID" value="CAL19113.1"/>
    <property type="molecule type" value="Genomic_DNA"/>
</dbReference>
<dbReference type="EMBL" id="AE017042">
    <property type="protein sequence ID" value="AAS63897.1"/>
    <property type="molecule type" value="Genomic_DNA"/>
</dbReference>
<dbReference type="PIR" id="AG0053">
    <property type="entry name" value="AG0053"/>
</dbReference>
<dbReference type="RefSeq" id="WP_002209211.1">
    <property type="nucleotide sequence ID" value="NZ_WUCM01000002.1"/>
</dbReference>
<dbReference type="RefSeq" id="YP_002345508.1">
    <property type="nucleotide sequence ID" value="NC_003143.1"/>
</dbReference>
<dbReference type="STRING" id="214092.YPO0432"/>
<dbReference type="PaxDb" id="214092-YPO0432"/>
<dbReference type="DNASU" id="1148694"/>
<dbReference type="KEGG" id="ype:YPO0432"/>
<dbReference type="KEGG" id="ypk:y3747"/>
<dbReference type="PATRIC" id="fig|214092.21.peg.675"/>
<dbReference type="eggNOG" id="COG5487">
    <property type="taxonomic scope" value="Bacteria"/>
</dbReference>
<dbReference type="HOGENOM" id="CLU_187346_2_0_6"/>
<dbReference type="OMA" id="LRWTVIF"/>
<dbReference type="Proteomes" id="UP000000815">
    <property type="component" value="Chromosome"/>
</dbReference>
<dbReference type="Proteomes" id="UP000001019">
    <property type="component" value="Chromosome"/>
</dbReference>
<dbReference type="Proteomes" id="UP000002490">
    <property type="component" value="Chromosome"/>
</dbReference>
<dbReference type="GO" id="GO:0005886">
    <property type="term" value="C:plasma membrane"/>
    <property type="evidence" value="ECO:0007669"/>
    <property type="project" value="UniProtKB-SubCell"/>
</dbReference>
<dbReference type="HAMAP" id="MF_01361">
    <property type="entry name" value="UPF0391"/>
    <property type="match status" value="1"/>
</dbReference>
<dbReference type="InterPro" id="IPR009760">
    <property type="entry name" value="DUF1328"/>
</dbReference>
<dbReference type="NCBIfam" id="NF010229">
    <property type="entry name" value="PRK13682.1-4"/>
    <property type="match status" value="1"/>
</dbReference>
<dbReference type="NCBIfam" id="NF010230">
    <property type="entry name" value="PRK13682.1-5"/>
    <property type="match status" value="1"/>
</dbReference>
<dbReference type="Pfam" id="PF07043">
    <property type="entry name" value="DUF1328"/>
    <property type="match status" value="1"/>
</dbReference>
<dbReference type="PIRSF" id="PIRSF036466">
    <property type="entry name" value="UCP036466"/>
    <property type="match status" value="1"/>
</dbReference>